<proteinExistence type="inferred from homology"/>
<accession>P0C1S4</accession>
<accession>P0A0B4</accession>
<accession>P51065</accession>
<organism>
    <name type="scientific">Staphylococcus aureus</name>
    <dbReference type="NCBI Taxonomy" id="1280"/>
    <lineage>
        <taxon>Bacteria</taxon>
        <taxon>Bacillati</taxon>
        <taxon>Bacillota</taxon>
        <taxon>Bacilli</taxon>
        <taxon>Bacillales</taxon>
        <taxon>Staphylococcaceae</taxon>
        <taxon>Staphylococcus</taxon>
    </lineage>
</organism>
<dbReference type="EC" id="4.1.1.49" evidence="1"/>
<dbReference type="EMBL" id="U51133">
    <property type="protein sequence ID" value="AAA96060.1"/>
    <property type="molecule type" value="Genomic_DNA"/>
</dbReference>
<dbReference type="RefSeq" id="WP_000109906.1">
    <property type="nucleotide sequence ID" value="NZ_WYDB01000002.1"/>
</dbReference>
<dbReference type="SMR" id="P0C1S4"/>
<dbReference type="OMA" id="MRYAGEM"/>
<dbReference type="UniPathway" id="UPA00138"/>
<dbReference type="GO" id="GO:0005829">
    <property type="term" value="C:cytosol"/>
    <property type="evidence" value="ECO:0007669"/>
    <property type="project" value="TreeGrafter"/>
</dbReference>
<dbReference type="GO" id="GO:0005524">
    <property type="term" value="F:ATP binding"/>
    <property type="evidence" value="ECO:0007669"/>
    <property type="project" value="UniProtKB-UniRule"/>
</dbReference>
<dbReference type="GO" id="GO:0046872">
    <property type="term" value="F:metal ion binding"/>
    <property type="evidence" value="ECO:0007669"/>
    <property type="project" value="UniProtKB-KW"/>
</dbReference>
<dbReference type="GO" id="GO:0004612">
    <property type="term" value="F:phosphoenolpyruvate carboxykinase (ATP) activity"/>
    <property type="evidence" value="ECO:0007669"/>
    <property type="project" value="UniProtKB-UniRule"/>
</dbReference>
<dbReference type="GO" id="GO:0006094">
    <property type="term" value="P:gluconeogenesis"/>
    <property type="evidence" value="ECO:0007669"/>
    <property type="project" value="UniProtKB-UniRule"/>
</dbReference>
<dbReference type="CDD" id="cd00484">
    <property type="entry name" value="PEPCK_ATP"/>
    <property type="match status" value="1"/>
</dbReference>
<dbReference type="FunFam" id="2.170.8.10:FF:000001">
    <property type="entry name" value="Phosphoenolpyruvate carboxykinase (ATP)"/>
    <property type="match status" value="1"/>
</dbReference>
<dbReference type="FunFam" id="3.40.449.10:FF:000001">
    <property type="entry name" value="Phosphoenolpyruvate carboxykinase (ATP)"/>
    <property type="match status" value="1"/>
</dbReference>
<dbReference type="Gene3D" id="3.90.228.20">
    <property type="match status" value="1"/>
</dbReference>
<dbReference type="Gene3D" id="3.40.449.10">
    <property type="entry name" value="Phosphoenolpyruvate Carboxykinase, domain 1"/>
    <property type="match status" value="1"/>
</dbReference>
<dbReference type="Gene3D" id="2.170.8.10">
    <property type="entry name" value="Phosphoenolpyruvate Carboxykinase, domain 2"/>
    <property type="match status" value="1"/>
</dbReference>
<dbReference type="HAMAP" id="MF_00453">
    <property type="entry name" value="PEPCK_ATP"/>
    <property type="match status" value="1"/>
</dbReference>
<dbReference type="InterPro" id="IPR001272">
    <property type="entry name" value="PEP_carboxykinase_ATP"/>
</dbReference>
<dbReference type="InterPro" id="IPR013035">
    <property type="entry name" value="PEP_carboxykinase_C"/>
</dbReference>
<dbReference type="InterPro" id="IPR008210">
    <property type="entry name" value="PEP_carboxykinase_N"/>
</dbReference>
<dbReference type="InterPro" id="IPR015994">
    <property type="entry name" value="PEPCK_ATP_CS"/>
</dbReference>
<dbReference type="NCBIfam" id="TIGR00224">
    <property type="entry name" value="pckA"/>
    <property type="match status" value="1"/>
</dbReference>
<dbReference type="NCBIfam" id="NF006820">
    <property type="entry name" value="PRK09344.1-2"/>
    <property type="match status" value="1"/>
</dbReference>
<dbReference type="NCBIfam" id="NF006821">
    <property type="entry name" value="PRK09344.1-3"/>
    <property type="match status" value="1"/>
</dbReference>
<dbReference type="PANTHER" id="PTHR30031:SF0">
    <property type="entry name" value="PHOSPHOENOLPYRUVATE CARBOXYKINASE (ATP)"/>
    <property type="match status" value="1"/>
</dbReference>
<dbReference type="PANTHER" id="PTHR30031">
    <property type="entry name" value="PHOSPHOENOLPYRUVATE CARBOXYKINASE ATP"/>
    <property type="match status" value="1"/>
</dbReference>
<dbReference type="Pfam" id="PF01293">
    <property type="entry name" value="PEPCK_ATP"/>
    <property type="match status" value="1"/>
</dbReference>
<dbReference type="PIRSF" id="PIRSF006294">
    <property type="entry name" value="PEP_crbxkin"/>
    <property type="match status" value="1"/>
</dbReference>
<dbReference type="SUPFAM" id="SSF68923">
    <property type="entry name" value="PEP carboxykinase N-terminal domain"/>
    <property type="match status" value="1"/>
</dbReference>
<dbReference type="SUPFAM" id="SSF53795">
    <property type="entry name" value="PEP carboxykinase-like"/>
    <property type="match status" value="1"/>
</dbReference>
<dbReference type="PROSITE" id="PS00532">
    <property type="entry name" value="PEPCK_ATP"/>
    <property type="match status" value="1"/>
</dbReference>
<keyword id="KW-0067">ATP-binding</keyword>
<keyword id="KW-0963">Cytoplasm</keyword>
<keyword id="KW-0210">Decarboxylase</keyword>
<keyword id="KW-0312">Gluconeogenesis</keyword>
<keyword id="KW-0456">Lyase</keyword>
<keyword id="KW-0464">Manganese</keyword>
<keyword id="KW-0479">Metal-binding</keyword>
<keyword id="KW-0547">Nucleotide-binding</keyword>
<gene>
    <name evidence="1" type="primary">pckA</name>
</gene>
<reference key="1">
    <citation type="submission" date="1996-04" db="EMBL/GenBank/DDBJ databases">
        <authorList>
            <person name="Tremblay A."/>
            <person name="Sasarman A."/>
        </authorList>
    </citation>
    <scope>NUCLEOTIDE SEQUENCE [GENOMIC DNA]</scope>
</reference>
<evidence type="ECO:0000255" key="1">
    <source>
        <dbReference type="HAMAP-Rule" id="MF_00453"/>
    </source>
</evidence>
<name>PCKA_STAAU</name>
<sequence length="530" mass="59377">MSVDTYTETTKIDKLLKKPTSHFQLSTTQLYNKILDNNEGVLTELGAVNASTGKYTGRSPKDKFFVSEPSYRDNIDWGEINQPIDEETFLKLYHKVLDYLDKKDELYVFKGYAGSDKDTMLKLTVINELAWHNLFAKNMFIRPESKEEATKIKPNFTIVSAPHFKADPEVDGTKSETFVIISFKHKVILIGGTEYAGEMKKGIFSVMNYLLPMQDIMSMHCSANVGEKGDVALFFGLSGTGKTTLSADPHRKLIGDDEHGWNKNGVFNIEGGCYAKAINLSKEKEPQIFDAIKYGAILENTVVAEDGSVDFEDNRYTENTRAAYPINHIDNIVVPSKAAHPNTIIFLTADAFGVIPPISKLNKDQAMYHFLSGFTSKLAGTERGVTEPEPSFSTCFGAPFFPLHPTVYADLLGELIDLHDVDVYLVNTGWTGGKYGVGRRISLHYTRQMVNQAISGKLKNAEYTKDSTFGLSIPVEIEDVPKTILNPINAWSDKEKYKAQAEDLIQRFEKNFEKFGEKVEHIAEKGSFNK</sequence>
<protein>
    <recommendedName>
        <fullName evidence="1">Phosphoenolpyruvate carboxykinase (ATP)</fullName>
        <shortName evidence="1">PCK</shortName>
        <shortName evidence="1">PEP carboxykinase</shortName>
        <shortName evidence="1">PEPCK</shortName>
        <ecNumber evidence="1">4.1.1.49</ecNumber>
    </recommendedName>
</protein>
<feature type="chain" id="PRO_0000203848" description="Phosphoenolpyruvate carboxykinase (ATP)">
    <location>
        <begin position="1"/>
        <end position="530"/>
    </location>
</feature>
<feature type="binding site" evidence="1">
    <location>
        <position position="58"/>
    </location>
    <ligand>
        <name>substrate</name>
    </ligand>
</feature>
<feature type="binding site" evidence="1">
    <location>
        <position position="195"/>
    </location>
    <ligand>
        <name>substrate</name>
    </ligand>
</feature>
<feature type="binding site" evidence="1">
    <location>
        <position position="201"/>
    </location>
    <ligand>
        <name>ATP</name>
        <dbReference type="ChEBI" id="CHEBI:30616"/>
    </ligand>
</feature>
<feature type="binding site" evidence="1">
    <location>
        <position position="201"/>
    </location>
    <ligand>
        <name>Mn(2+)</name>
        <dbReference type="ChEBI" id="CHEBI:29035"/>
    </ligand>
</feature>
<feature type="binding site" evidence="1">
    <location>
        <position position="201"/>
    </location>
    <ligand>
        <name>substrate</name>
    </ligand>
</feature>
<feature type="binding site" evidence="1">
    <location>
        <position position="220"/>
    </location>
    <ligand>
        <name>ATP</name>
        <dbReference type="ChEBI" id="CHEBI:30616"/>
    </ligand>
</feature>
<feature type="binding site" evidence="1">
    <location>
        <position position="220"/>
    </location>
    <ligand>
        <name>Mn(2+)</name>
        <dbReference type="ChEBI" id="CHEBI:29035"/>
    </ligand>
</feature>
<feature type="binding site" evidence="1">
    <location>
        <begin position="236"/>
        <end position="244"/>
    </location>
    <ligand>
        <name>ATP</name>
        <dbReference type="ChEBI" id="CHEBI:30616"/>
    </ligand>
</feature>
<feature type="binding site" evidence="1">
    <location>
        <position position="257"/>
    </location>
    <ligand>
        <name>Mn(2+)</name>
        <dbReference type="ChEBI" id="CHEBI:29035"/>
    </ligand>
</feature>
<feature type="binding site" evidence="1">
    <location>
        <position position="285"/>
    </location>
    <ligand>
        <name>ATP</name>
        <dbReference type="ChEBI" id="CHEBI:30616"/>
    </ligand>
</feature>
<feature type="binding site" evidence="1">
    <location>
        <position position="321"/>
    </location>
    <ligand>
        <name>ATP</name>
        <dbReference type="ChEBI" id="CHEBI:30616"/>
    </ligand>
</feature>
<feature type="binding site" evidence="1">
    <location>
        <position position="321"/>
    </location>
    <ligand>
        <name>substrate</name>
    </ligand>
</feature>
<feature type="binding site" evidence="1">
    <location>
        <begin position="440"/>
        <end position="441"/>
    </location>
    <ligand>
        <name>ATP</name>
        <dbReference type="ChEBI" id="CHEBI:30616"/>
    </ligand>
</feature>
<feature type="binding site" evidence="1">
    <location>
        <position position="446"/>
    </location>
    <ligand>
        <name>ATP</name>
        <dbReference type="ChEBI" id="CHEBI:30616"/>
    </ligand>
</feature>
<comment type="function">
    <text evidence="1">Involved in the gluconeogenesis. Catalyzes the conversion of oxaloacetate (OAA) to phosphoenolpyruvate (PEP) through direct phosphoryl transfer between the nucleoside triphosphate and OAA.</text>
</comment>
<comment type="catalytic activity">
    <reaction evidence="1">
        <text>oxaloacetate + ATP = phosphoenolpyruvate + ADP + CO2</text>
        <dbReference type="Rhea" id="RHEA:18617"/>
        <dbReference type="ChEBI" id="CHEBI:16452"/>
        <dbReference type="ChEBI" id="CHEBI:16526"/>
        <dbReference type="ChEBI" id="CHEBI:30616"/>
        <dbReference type="ChEBI" id="CHEBI:58702"/>
        <dbReference type="ChEBI" id="CHEBI:456216"/>
        <dbReference type="EC" id="4.1.1.49"/>
    </reaction>
</comment>
<comment type="cofactor">
    <cofactor evidence="1">
        <name>Mn(2+)</name>
        <dbReference type="ChEBI" id="CHEBI:29035"/>
    </cofactor>
    <text evidence="1">Binds 1 Mn(2+) ion per subunit.</text>
</comment>
<comment type="pathway">
    <text evidence="1">Carbohydrate biosynthesis; gluconeogenesis.</text>
</comment>
<comment type="subcellular location">
    <subcellularLocation>
        <location evidence="1">Cytoplasm</location>
    </subcellularLocation>
</comment>
<comment type="similarity">
    <text evidence="1">Belongs to the phosphoenolpyruvate carboxykinase (ATP) family.</text>
</comment>